<proteinExistence type="inferred from homology"/>
<keyword id="KW-0963">Cytoplasm</keyword>
<keyword id="KW-0251">Elongation factor</keyword>
<keyword id="KW-0342">GTP-binding</keyword>
<keyword id="KW-0378">Hydrolase</keyword>
<keyword id="KW-0460">Magnesium</keyword>
<keyword id="KW-0479">Metal-binding</keyword>
<keyword id="KW-0547">Nucleotide-binding</keyword>
<keyword id="KW-0648">Protein biosynthesis</keyword>
<evidence type="ECO:0000250" key="1"/>
<evidence type="ECO:0000255" key="2">
    <source>
        <dbReference type="HAMAP-Rule" id="MF_00118"/>
    </source>
</evidence>
<accession>C3LJ80</accession>
<sequence length="395" mass="42939">MAKAKFERSKPHVNIGTIGHVDHGKTTLTAAITTVLAKAGGAEARGYDQIDAAPEERERGITISTAHVEYETETRHYAHVDCPGHADYVKNMITGAAQMDGGILVVSAADGPMPQTREHILLSRQVGVPYIVVFLNKCDMVDDEELLELVEMEVRDLLSEYGFPGDDIPVIKGSALKALQGEADWEAKIIELMAEVDAYIPTPERETDKPFLMPVEDVFSITGRGTVATGRVERGIVKVGDVVEIIGLAEENASTTVTGVEMFRKLLDQAQAGDNIGALLRGVAREDIQRGQVLAKSGSVKAHAKFKAEVFVLSKEEGGRHTPFFANYRPQFYFRTTDVTGIIQLPEGTEMVMPGDNIEMTIELIAPIAIEEGTKFSIREGGRTVGYGVVATIVE</sequence>
<protein>
    <recommendedName>
        <fullName evidence="2">Elongation factor Tu</fullName>
        <shortName evidence="2">EF-Tu</shortName>
        <ecNumber evidence="2">3.6.5.3</ecNumber>
    </recommendedName>
</protein>
<dbReference type="EC" id="3.6.5.3" evidence="2"/>
<dbReference type="EMBL" id="CP001215">
    <property type="protein sequence ID" value="ACP13290.1"/>
    <property type="molecule type" value="Genomic_DNA"/>
</dbReference>
<dbReference type="RefSeq" id="WP_001029614.1">
    <property type="nucleotide sequence ID" value="NC_012581.1"/>
</dbReference>
<dbReference type="SMR" id="C3LJ80"/>
<dbReference type="GeneID" id="93010945"/>
<dbReference type="KEGG" id="bah:BAMEG_0124"/>
<dbReference type="HOGENOM" id="CLU_007265_0_1_9"/>
<dbReference type="GO" id="GO:0005829">
    <property type="term" value="C:cytosol"/>
    <property type="evidence" value="ECO:0007669"/>
    <property type="project" value="TreeGrafter"/>
</dbReference>
<dbReference type="GO" id="GO:0005525">
    <property type="term" value="F:GTP binding"/>
    <property type="evidence" value="ECO:0007669"/>
    <property type="project" value="UniProtKB-UniRule"/>
</dbReference>
<dbReference type="GO" id="GO:0003924">
    <property type="term" value="F:GTPase activity"/>
    <property type="evidence" value="ECO:0007669"/>
    <property type="project" value="InterPro"/>
</dbReference>
<dbReference type="GO" id="GO:0003746">
    <property type="term" value="F:translation elongation factor activity"/>
    <property type="evidence" value="ECO:0007669"/>
    <property type="project" value="UniProtKB-UniRule"/>
</dbReference>
<dbReference type="CDD" id="cd01884">
    <property type="entry name" value="EF_Tu"/>
    <property type="match status" value="1"/>
</dbReference>
<dbReference type="CDD" id="cd03697">
    <property type="entry name" value="EFTU_II"/>
    <property type="match status" value="1"/>
</dbReference>
<dbReference type="CDD" id="cd03707">
    <property type="entry name" value="EFTU_III"/>
    <property type="match status" value="1"/>
</dbReference>
<dbReference type="FunFam" id="2.40.30.10:FF:000001">
    <property type="entry name" value="Elongation factor Tu"/>
    <property type="match status" value="1"/>
</dbReference>
<dbReference type="FunFam" id="3.40.50.300:FF:000003">
    <property type="entry name" value="Elongation factor Tu"/>
    <property type="match status" value="1"/>
</dbReference>
<dbReference type="Gene3D" id="3.40.50.300">
    <property type="entry name" value="P-loop containing nucleotide triphosphate hydrolases"/>
    <property type="match status" value="1"/>
</dbReference>
<dbReference type="Gene3D" id="2.40.30.10">
    <property type="entry name" value="Translation factors"/>
    <property type="match status" value="2"/>
</dbReference>
<dbReference type="HAMAP" id="MF_00118_B">
    <property type="entry name" value="EF_Tu_B"/>
    <property type="match status" value="1"/>
</dbReference>
<dbReference type="InterPro" id="IPR041709">
    <property type="entry name" value="EF-Tu_GTP-bd"/>
</dbReference>
<dbReference type="InterPro" id="IPR050055">
    <property type="entry name" value="EF-Tu_GTPase"/>
</dbReference>
<dbReference type="InterPro" id="IPR004161">
    <property type="entry name" value="EFTu-like_2"/>
</dbReference>
<dbReference type="InterPro" id="IPR033720">
    <property type="entry name" value="EFTU_2"/>
</dbReference>
<dbReference type="InterPro" id="IPR031157">
    <property type="entry name" value="G_TR_CS"/>
</dbReference>
<dbReference type="InterPro" id="IPR027417">
    <property type="entry name" value="P-loop_NTPase"/>
</dbReference>
<dbReference type="InterPro" id="IPR005225">
    <property type="entry name" value="Small_GTP-bd"/>
</dbReference>
<dbReference type="InterPro" id="IPR000795">
    <property type="entry name" value="T_Tr_GTP-bd_dom"/>
</dbReference>
<dbReference type="InterPro" id="IPR009000">
    <property type="entry name" value="Transl_B-barrel_sf"/>
</dbReference>
<dbReference type="InterPro" id="IPR009001">
    <property type="entry name" value="Transl_elong_EF1A/Init_IF2_C"/>
</dbReference>
<dbReference type="InterPro" id="IPR004541">
    <property type="entry name" value="Transl_elong_EFTu/EF1A_bac/org"/>
</dbReference>
<dbReference type="InterPro" id="IPR004160">
    <property type="entry name" value="Transl_elong_EFTu/EF1A_C"/>
</dbReference>
<dbReference type="NCBIfam" id="TIGR00485">
    <property type="entry name" value="EF-Tu"/>
    <property type="match status" value="1"/>
</dbReference>
<dbReference type="NCBIfam" id="NF000766">
    <property type="entry name" value="PRK00049.1"/>
    <property type="match status" value="1"/>
</dbReference>
<dbReference type="NCBIfam" id="NF009372">
    <property type="entry name" value="PRK12735.1"/>
    <property type="match status" value="1"/>
</dbReference>
<dbReference type="NCBIfam" id="NF009373">
    <property type="entry name" value="PRK12736.1"/>
    <property type="match status" value="1"/>
</dbReference>
<dbReference type="NCBIfam" id="TIGR00231">
    <property type="entry name" value="small_GTP"/>
    <property type="match status" value="1"/>
</dbReference>
<dbReference type="PANTHER" id="PTHR43721:SF22">
    <property type="entry name" value="ELONGATION FACTOR TU, MITOCHONDRIAL"/>
    <property type="match status" value="1"/>
</dbReference>
<dbReference type="PANTHER" id="PTHR43721">
    <property type="entry name" value="ELONGATION FACTOR TU-RELATED"/>
    <property type="match status" value="1"/>
</dbReference>
<dbReference type="Pfam" id="PF00009">
    <property type="entry name" value="GTP_EFTU"/>
    <property type="match status" value="1"/>
</dbReference>
<dbReference type="Pfam" id="PF03144">
    <property type="entry name" value="GTP_EFTU_D2"/>
    <property type="match status" value="1"/>
</dbReference>
<dbReference type="Pfam" id="PF03143">
    <property type="entry name" value="GTP_EFTU_D3"/>
    <property type="match status" value="1"/>
</dbReference>
<dbReference type="PRINTS" id="PR00315">
    <property type="entry name" value="ELONGATNFCT"/>
</dbReference>
<dbReference type="SUPFAM" id="SSF50465">
    <property type="entry name" value="EF-Tu/eEF-1alpha/eIF2-gamma C-terminal domain"/>
    <property type="match status" value="1"/>
</dbReference>
<dbReference type="SUPFAM" id="SSF52540">
    <property type="entry name" value="P-loop containing nucleoside triphosphate hydrolases"/>
    <property type="match status" value="1"/>
</dbReference>
<dbReference type="SUPFAM" id="SSF50447">
    <property type="entry name" value="Translation proteins"/>
    <property type="match status" value="1"/>
</dbReference>
<dbReference type="PROSITE" id="PS00301">
    <property type="entry name" value="G_TR_1"/>
    <property type="match status" value="1"/>
</dbReference>
<dbReference type="PROSITE" id="PS51722">
    <property type="entry name" value="G_TR_2"/>
    <property type="match status" value="1"/>
</dbReference>
<name>EFTU_BACAC</name>
<comment type="function">
    <text evidence="2">GTP hydrolase that promotes the GTP-dependent binding of aminoacyl-tRNA to the A-site of ribosomes during protein biosynthesis.</text>
</comment>
<comment type="catalytic activity">
    <reaction evidence="2">
        <text>GTP + H2O = GDP + phosphate + H(+)</text>
        <dbReference type="Rhea" id="RHEA:19669"/>
        <dbReference type="ChEBI" id="CHEBI:15377"/>
        <dbReference type="ChEBI" id="CHEBI:15378"/>
        <dbReference type="ChEBI" id="CHEBI:37565"/>
        <dbReference type="ChEBI" id="CHEBI:43474"/>
        <dbReference type="ChEBI" id="CHEBI:58189"/>
        <dbReference type="EC" id="3.6.5.3"/>
    </reaction>
    <physiologicalReaction direction="left-to-right" evidence="2">
        <dbReference type="Rhea" id="RHEA:19670"/>
    </physiologicalReaction>
</comment>
<comment type="subunit">
    <text evidence="2">Monomer.</text>
</comment>
<comment type="subcellular location">
    <subcellularLocation>
        <location evidence="2">Cytoplasm</location>
    </subcellularLocation>
</comment>
<comment type="similarity">
    <text evidence="2">Belongs to the TRAFAC class translation factor GTPase superfamily. Classic translation factor GTPase family. EF-Tu/EF-1A subfamily.</text>
</comment>
<gene>
    <name evidence="2" type="primary">tuf</name>
    <name type="ordered locus">BAMEG_0124</name>
</gene>
<feature type="chain" id="PRO_1000201380" description="Elongation factor Tu">
    <location>
        <begin position="1"/>
        <end position="395"/>
    </location>
</feature>
<feature type="domain" description="tr-type G">
    <location>
        <begin position="10"/>
        <end position="204"/>
    </location>
</feature>
<feature type="region of interest" description="G1" evidence="1">
    <location>
        <begin position="19"/>
        <end position="26"/>
    </location>
</feature>
<feature type="region of interest" description="G2" evidence="1">
    <location>
        <begin position="60"/>
        <end position="64"/>
    </location>
</feature>
<feature type="region of interest" description="G3" evidence="1">
    <location>
        <begin position="81"/>
        <end position="84"/>
    </location>
</feature>
<feature type="region of interest" description="G4" evidence="1">
    <location>
        <begin position="136"/>
        <end position="139"/>
    </location>
</feature>
<feature type="region of interest" description="G5" evidence="1">
    <location>
        <begin position="174"/>
        <end position="176"/>
    </location>
</feature>
<feature type="binding site" evidence="2">
    <location>
        <begin position="19"/>
        <end position="26"/>
    </location>
    <ligand>
        <name>GTP</name>
        <dbReference type="ChEBI" id="CHEBI:37565"/>
    </ligand>
</feature>
<feature type="binding site" evidence="2">
    <location>
        <position position="26"/>
    </location>
    <ligand>
        <name>Mg(2+)</name>
        <dbReference type="ChEBI" id="CHEBI:18420"/>
    </ligand>
</feature>
<feature type="binding site" evidence="2">
    <location>
        <begin position="81"/>
        <end position="85"/>
    </location>
    <ligand>
        <name>GTP</name>
        <dbReference type="ChEBI" id="CHEBI:37565"/>
    </ligand>
</feature>
<feature type="binding site" evidence="2">
    <location>
        <begin position="136"/>
        <end position="139"/>
    </location>
    <ligand>
        <name>GTP</name>
        <dbReference type="ChEBI" id="CHEBI:37565"/>
    </ligand>
</feature>
<reference key="1">
    <citation type="submission" date="2008-10" db="EMBL/GenBank/DDBJ databases">
        <title>Genome sequence of Bacillus anthracis str. CDC 684.</title>
        <authorList>
            <person name="Dodson R.J."/>
            <person name="Munk A.C."/>
            <person name="Brettin T."/>
            <person name="Bruce D."/>
            <person name="Detter C."/>
            <person name="Tapia R."/>
            <person name="Han C."/>
            <person name="Sutton G."/>
            <person name="Sims D."/>
        </authorList>
    </citation>
    <scope>NUCLEOTIDE SEQUENCE [LARGE SCALE GENOMIC DNA]</scope>
    <source>
        <strain>CDC 684 / NRRL 3495</strain>
    </source>
</reference>
<organism>
    <name type="scientific">Bacillus anthracis (strain CDC 684 / NRRL 3495)</name>
    <dbReference type="NCBI Taxonomy" id="568206"/>
    <lineage>
        <taxon>Bacteria</taxon>
        <taxon>Bacillati</taxon>
        <taxon>Bacillota</taxon>
        <taxon>Bacilli</taxon>
        <taxon>Bacillales</taxon>
        <taxon>Bacillaceae</taxon>
        <taxon>Bacillus</taxon>
        <taxon>Bacillus cereus group</taxon>
    </lineage>
</organism>